<proteinExistence type="inferred from homology"/>
<comment type="function">
    <text evidence="1">Binds directly to 23S rRNA. The L1 stalk is quite mobile in the ribosome, and is involved in E site tRNA release.</text>
</comment>
<comment type="function">
    <text evidence="1">Protein L1 is also a translational repressor protein, it controls the translation of the L11 operon by binding to its mRNA.</text>
</comment>
<comment type="subunit">
    <text evidence="1">Part of the 50S ribosomal subunit.</text>
</comment>
<comment type="similarity">
    <text evidence="1">Belongs to the universal ribosomal protein uL1 family.</text>
</comment>
<evidence type="ECO:0000255" key="1">
    <source>
        <dbReference type="HAMAP-Rule" id="MF_01318"/>
    </source>
</evidence>
<evidence type="ECO:0000305" key="2"/>
<dbReference type="EMBL" id="CP000849">
    <property type="protein sequence ID" value="ABV78692.1"/>
    <property type="molecule type" value="Genomic_DNA"/>
</dbReference>
<dbReference type="RefSeq" id="WP_011477815.1">
    <property type="nucleotide sequence ID" value="NC_009883.1"/>
</dbReference>
<dbReference type="SMR" id="A8GV21"/>
<dbReference type="KEGG" id="rbo:A1I_01500"/>
<dbReference type="HOGENOM" id="CLU_062853_0_0_5"/>
<dbReference type="GO" id="GO:0015934">
    <property type="term" value="C:large ribosomal subunit"/>
    <property type="evidence" value="ECO:0007669"/>
    <property type="project" value="InterPro"/>
</dbReference>
<dbReference type="GO" id="GO:0019843">
    <property type="term" value="F:rRNA binding"/>
    <property type="evidence" value="ECO:0007669"/>
    <property type="project" value="UniProtKB-UniRule"/>
</dbReference>
<dbReference type="GO" id="GO:0003735">
    <property type="term" value="F:structural constituent of ribosome"/>
    <property type="evidence" value="ECO:0007669"/>
    <property type="project" value="InterPro"/>
</dbReference>
<dbReference type="GO" id="GO:0000049">
    <property type="term" value="F:tRNA binding"/>
    <property type="evidence" value="ECO:0007669"/>
    <property type="project" value="UniProtKB-KW"/>
</dbReference>
<dbReference type="GO" id="GO:0006417">
    <property type="term" value="P:regulation of translation"/>
    <property type="evidence" value="ECO:0007669"/>
    <property type="project" value="UniProtKB-KW"/>
</dbReference>
<dbReference type="GO" id="GO:0006412">
    <property type="term" value="P:translation"/>
    <property type="evidence" value="ECO:0007669"/>
    <property type="project" value="UniProtKB-UniRule"/>
</dbReference>
<dbReference type="CDD" id="cd00403">
    <property type="entry name" value="Ribosomal_L1"/>
    <property type="match status" value="1"/>
</dbReference>
<dbReference type="FunFam" id="3.40.50.790:FF:000001">
    <property type="entry name" value="50S ribosomal protein L1"/>
    <property type="match status" value="1"/>
</dbReference>
<dbReference type="Gene3D" id="3.30.190.20">
    <property type="match status" value="1"/>
</dbReference>
<dbReference type="Gene3D" id="3.40.50.790">
    <property type="match status" value="1"/>
</dbReference>
<dbReference type="HAMAP" id="MF_01318_B">
    <property type="entry name" value="Ribosomal_uL1_B"/>
    <property type="match status" value="1"/>
</dbReference>
<dbReference type="InterPro" id="IPR005878">
    <property type="entry name" value="Ribosom_uL1_bac-type"/>
</dbReference>
<dbReference type="InterPro" id="IPR002143">
    <property type="entry name" value="Ribosomal_uL1"/>
</dbReference>
<dbReference type="InterPro" id="IPR023674">
    <property type="entry name" value="Ribosomal_uL1-like"/>
</dbReference>
<dbReference type="InterPro" id="IPR028364">
    <property type="entry name" value="Ribosomal_uL1/biogenesis"/>
</dbReference>
<dbReference type="InterPro" id="IPR016095">
    <property type="entry name" value="Ribosomal_uL1_3-a/b-sand"/>
</dbReference>
<dbReference type="InterPro" id="IPR023673">
    <property type="entry name" value="Ribosomal_uL1_CS"/>
</dbReference>
<dbReference type="NCBIfam" id="TIGR01169">
    <property type="entry name" value="rplA_bact"/>
    <property type="match status" value="1"/>
</dbReference>
<dbReference type="PANTHER" id="PTHR36427">
    <property type="entry name" value="54S RIBOSOMAL PROTEIN L1, MITOCHONDRIAL"/>
    <property type="match status" value="1"/>
</dbReference>
<dbReference type="PANTHER" id="PTHR36427:SF3">
    <property type="entry name" value="LARGE RIBOSOMAL SUBUNIT PROTEIN UL1M"/>
    <property type="match status" value="1"/>
</dbReference>
<dbReference type="Pfam" id="PF00687">
    <property type="entry name" value="Ribosomal_L1"/>
    <property type="match status" value="1"/>
</dbReference>
<dbReference type="PIRSF" id="PIRSF002155">
    <property type="entry name" value="Ribosomal_L1"/>
    <property type="match status" value="1"/>
</dbReference>
<dbReference type="SUPFAM" id="SSF56808">
    <property type="entry name" value="Ribosomal protein L1"/>
    <property type="match status" value="1"/>
</dbReference>
<dbReference type="PROSITE" id="PS01199">
    <property type="entry name" value="RIBOSOMAL_L1"/>
    <property type="match status" value="1"/>
</dbReference>
<sequence length="239" mass="25394">MSNNKDVAIKSSGGKKIREARIKVRSDSLYNLTTAVEKLKSASYVKFDPTLEIVMKLGIDPRHSDQMVRGVVNLPAGTGKTVRVAVICKEEREEEAKVAGADLVGSTNIIDEIKAGKINFDVCIATPDMMAVIGSVARILGPKGLMPNPKLGTVTLDIKGAVKNAKSGQVEYRAEKAGIIHAGLGKLSFPDQDLLKNLKAFIDAVVKAKPTGVKGSYLKAIYLSSTMGASVQIDLASIA</sequence>
<protein>
    <recommendedName>
        <fullName evidence="1">Large ribosomal subunit protein uL1</fullName>
    </recommendedName>
    <alternativeName>
        <fullName evidence="2">50S ribosomal protein L1</fullName>
    </alternativeName>
</protein>
<accession>A8GV21</accession>
<gene>
    <name evidence="1" type="primary">rplA</name>
    <name type="ordered locus">A1I_01500</name>
</gene>
<feature type="chain" id="PRO_1000051918" description="Large ribosomal subunit protein uL1">
    <location>
        <begin position="1"/>
        <end position="239"/>
    </location>
</feature>
<keyword id="KW-0678">Repressor</keyword>
<keyword id="KW-0687">Ribonucleoprotein</keyword>
<keyword id="KW-0689">Ribosomal protein</keyword>
<keyword id="KW-0694">RNA-binding</keyword>
<keyword id="KW-0699">rRNA-binding</keyword>
<keyword id="KW-0810">Translation regulation</keyword>
<keyword id="KW-0820">tRNA-binding</keyword>
<organism>
    <name type="scientific">Rickettsia bellii (strain OSU 85-389)</name>
    <dbReference type="NCBI Taxonomy" id="391896"/>
    <lineage>
        <taxon>Bacteria</taxon>
        <taxon>Pseudomonadati</taxon>
        <taxon>Pseudomonadota</taxon>
        <taxon>Alphaproteobacteria</taxon>
        <taxon>Rickettsiales</taxon>
        <taxon>Rickettsiaceae</taxon>
        <taxon>Rickettsieae</taxon>
        <taxon>Rickettsia</taxon>
        <taxon>belli group</taxon>
    </lineage>
</organism>
<reference key="1">
    <citation type="submission" date="2007-09" db="EMBL/GenBank/DDBJ databases">
        <title>Complete genome sequencing of Rickettsia bellii.</title>
        <authorList>
            <person name="Madan A."/>
            <person name="Lee H."/>
            <person name="Madan A."/>
            <person name="Yoon J.-G."/>
            <person name="Ryu G.-Y."/>
            <person name="Dasch G."/>
            <person name="Ereemeva M."/>
        </authorList>
    </citation>
    <scope>NUCLEOTIDE SEQUENCE [LARGE SCALE GENOMIC DNA]</scope>
    <source>
        <strain>OSU 85-389</strain>
    </source>
</reference>
<name>RL1_RICB8</name>